<reference key="1">
    <citation type="journal article" date="2007" name="PLoS ONE">
        <title>The complete genome sequence and analysis of the Epsilonproteobacterium Arcobacter butzleri.</title>
        <authorList>
            <person name="Miller W.G."/>
            <person name="Parker C.T."/>
            <person name="Rubenfield M."/>
            <person name="Mendz G.L."/>
            <person name="Woesten M.M.S.M."/>
            <person name="Ussery D.W."/>
            <person name="Stolz J.F."/>
            <person name="Binnewies T.T."/>
            <person name="Hallin P.F."/>
            <person name="Wang G."/>
            <person name="Malek J.A."/>
            <person name="Rogosin A."/>
            <person name="Stanker L.H."/>
            <person name="Mandrell R.E."/>
        </authorList>
    </citation>
    <scope>NUCLEOTIDE SEQUENCE [LARGE SCALE GENOMIC DNA]</scope>
    <source>
        <strain>RM4018</strain>
    </source>
</reference>
<accession>A8ERS0</accession>
<comment type="function">
    <text evidence="1">Catalyzes the cyclization of GTP to (8S)-3',8-cyclo-7,8-dihydroguanosine 5'-triphosphate.</text>
</comment>
<comment type="catalytic activity">
    <reaction evidence="1">
        <text>GTP + AH2 + S-adenosyl-L-methionine = (8S)-3',8-cyclo-7,8-dihydroguanosine 5'-triphosphate + 5'-deoxyadenosine + L-methionine + A + H(+)</text>
        <dbReference type="Rhea" id="RHEA:49576"/>
        <dbReference type="ChEBI" id="CHEBI:13193"/>
        <dbReference type="ChEBI" id="CHEBI:15378"/>
        <dbReference type="ChEBI" id="CHEBI:17319"/>
        <dbReference type="ChEBI" id="CHEBI:17499"/>
        <dbReference type="ChEBI" id="CHEBI:37565"/>
        <dbReference type="ChEBI" id="CHEBI:57844"/>
        <dbReference type="ChEBI" id="CHEBI:59789"/>
        <dbReference type="ChEBI" id="CHEBI:131766"/>
        <dbReference type="EC" id="4.1.99.22"/>
    </reaction>
</comment>
<comment type="cofactor">
    <cofactor evidence="1">
        <name>[4Fe-4S] cluster</name>
        <dbReference type="ChEBI" id="CHEBI:49883"/>
    </cofactor>
    <text evidence="1">Binds 2 [4Fe-4S] clusters. Binds 1 [4Fe-4S] cluster coordinated with 3 cysteines and an exchangeable S-adenosyl-L-methionine and 1 [4Fe-4S] cluster coordinated with 3 cysteines and the GTP-derived substrate.</text>
</comment>
<comment type="pathway">
    <text evidence="1">Cofactor biosynthesis; molybdopterin biosynthesis.</text>
</comment>
<comment type="subunit">
    <text evidence="1">Monomer and homodimer.</text>
</comment>
<comment type="similarity">
    <text evidence="1">Belongs to the radical SAM superfamily. MoaA family.</text>
</comment>
<feature type="chain" id="PRO_1000066807" description="GTP 3',8-cyclase">
    <location>
        <begin position="1"/>
        <end position="323"/>
    </location>
</feature>
<feature type="domain" description="Radical SAM core" evidence="2">
    <location>
        <begin position="5"/>
        <end position="228"/>
    </location>
</feature>
<feature type="region of interest" description="Disordered" evidence="3">
    <location>
        <begin position="302"/>
        <end position="323"/>
    </location>
</feature>
<feature type="compositionally biased region" description="Basic and acidic residues" evidence="3">
    <location>
        <begin position="302"/>
        <end position="313"/>
    </location>
</feature>
<feature type="binding site" evidence="1">
    <location>
        <position position="14"/>
    </location>
    <ligand>
        <name>GTP</name>
        <dbReference type="ChEBI" id="CHEBI:37565"/>
    </ligand>
</feature>
<feature type="binding site" evidence="1">
    <location>
        <position position="21"/>
    </location>
    <ligand>
        <name>[4Fe-4S] cluster</name>
        <dbReference type="ChEBI" id="CHEBI:49883"/>
        <label>1</label>
        <note>4Fe-4S-S-AdoMet</note>
    </ligand>
</feature>
<feature type="binding site" evidence="1">
    <location>
        <position position="25"/>
    </location>
    <ligand>
        <name>[4Fe-4S] cluster</name>
        <dbReference type="ChEBI" id="CHEBI:49883"/>
        <label>1</label>
        <note>4Fe-4S-S-AdoMet</note>
    </ligand>
</feature>
<feature type="binding site" evidence="1">
    <location>
        <position position="27"/>
    </location>
    <ligand>
        <name>S-adenosyl-L-methionine</name>
        <dbReference type="ChEBI" id="CHEBI:59789"/>
    </ligand>
</feature>
<feature type="binding site" evidence="1">
    <location>
        <position position="28"/>
    </location>
    <ligand>
        <name>[4Fe-4S] cluster</name>
        <dbReference type="ChEBI" id="CHEBI:49883"/>
        <label>1</label>
        <note>4Fe-4S-S-AdoMet</note>
    </ligand>
</feature>
<feature type="binding site" evidence="1">
    <location>
        <position position="64"/>
    </location>
    <ligand>
        <name>GTP</name>
        <dbReference type="ChEBI" id="CHEBI:37565"/>
    </ligand>
</feature>
<feature type="binding site" evidence="1">
    <location>
        <position position="68"/>
    </location>
    <ligand>
        <name>S-adenosyl-L-methionine</name>
        <dbReference type="ChEBI" id="CHEBI:59789"/>
    </ligand>
</feature>
<feature type="binding site" evidence="1">
    <location>
        <position position="95"/>
    </location>
    <ligand>
        <name>GTP</name>
        <dbReference type="ChEBI" id="CHEBI:37565"/>
    </ligand>
</feature>
<feature type="binding site" evidence="1">
    <location>
        <position position="119"/>
    </location>
    <ligand>
        <name>S-adenosyl-L-methionine</name>
        <dbReference type="ChEBI" id="CHEBI:59789"/>
    </ligand>
</feature>
<feature type="binding site" evidence="1">
    <location>
        <position position="155"/>
    </location>
    <ligand>
        <name>GTP</name>
        <dbReference type="ChEBI" id="CHEBI:37565"/>
    </ligand>
</feature>
<feature type="binding site" evidence="1">
    <location>
        <position position="189"/>
    </location>
    <ligand>
        <name>S-adenosyl-L-methionine</name>
        <dbReference type="ChEBI" id="CHEBI:59789"/>
    </ligand>
</feature>
<feature type="binding site" evidence="1">
    <location>
        <position position="250"/>
    </location>
    <ligand>
        <name>[4Fe-4S] cluster</name>
        <dbReference type="ChEBI" id="CHEBI:49883"/>
        <label>2</label>
        <note>4Fe-4S-substrate</note>
    </ligand>
</feature>
<feature type="binding site" evidence="1">
    <location>
        <position position="253"/>
    </location>
    <ligand>
        <name>[4Fe-4S] cluster</name>
        <dbReference type="ChEBI" id="CHEBI:49883"/>
        <label>2</label>
        <note>4Fe-4S-substrate</note>
    </ligand>
</feature>
<feature type="binding site" evidence="1">
    <location>
        <begin position="255"/>
        <end position="257"/>
    </location>
    <ligand>
        <name>GTP</name>
        <dbReference type="ChEBI" id="CHEBI:37565"/>
    </ligand>
</feature>
<feature type="binding site" evidence="1">
    <location>
        <position position="267"/>
    </location>
    <ligand>
        <name>[4Fe-4S] cluster</name>
        <dbReference type="ChEBI" id="CHEBI:49883"/>
        <label>2</label>
        <note>4Fe-4S-substrate</note>
    </ligand>
</feature>
<name>MOAA_ALIB4</name>
<proteinExistence type="inferred from homology"/>
<organism>
    <name type="scientific">Aliarcobacter butzleri (strain RM4018)</name>
    <name type="common">Arcobacter butzleri</name>
    <dbReference type="NCBI Taxonomy" id="367737"/>
    <lineage>
        <taxon>Bacteria</taxon>
        <taxon>Pseudomonadati</taxon>
        <taxon>Campylobacterota</taxon>
        <taxon>Epsilonproteobacteria</taxon>
        <taxon>Campylobacterales</taxon>
        <taxon>Arcobacteraceae</taxon>
        <taxon>Aliarcobacter</taxon>
    </lineage>
</organism>
<evidence type="ECO:0000255" key="1">
    <source>
        <dbReference type="HAMAP-Rule" id="MF_01225"/>
    </source>
</evidence>
<evidence type="ECO:0000255" key="2">
    <source>
        <dbReference type="PROSITE-ProRule" id="PRU01266"/>
    </source>
</evidence>
<evidence type="ECO:0000256" key="3">
    <source>
        <dbReference type="SAM" id="MobiDB-lite"/>
    </source>
</evidence>
<keyword id="KW-0004">4Fe-4S</keyword>
<keyword id="KW-0342">GTP-binding</keyword>
<keyword id="KW-0408">Iron</keyword>
<keyword id="KW-0411">Iron-sulfur</keyword>
<keyword id="KW-0456">Lyase</keyword>
<keyword id="KW-0479">Metal-binding</keyword>
<keyword id="KW-0501">Molybdenum cofactor biosynthesis</keyword>
<keyword id="KW-0547">Nucleotide-binding</keyword>
<keyword id="KW-1185">Reference proteome</keyword>
<keyword id="KW-0949">S-adenosyl-L-methionine</keyword>
<gene>
    <name evidence="1" type="primary">moaA</name>
    <name type="ordered locus">Abu_0369</name>
</gene>
<dbReference type="EC" id="4.1.99.22" evidence="1"/>
<dbReference type="EMBL" id="CP000361">
    <property type="protein sequence ID" value="ABV66644.1"/>
    <property type="molecule type" value="Genomic_DNA"/>
</dbReference>
<dbReference type="RefSeq" id="WP_012012201.1">
    <property type="nucleotide sequence ID" value="NC_009850.1"/>
</dbReference>
<dbReference type="SMR" id="A8ERS0"/>
<dbReference type="STRING" id="367737.Abu_0369"/>
<dbReference type="GeneID" id="24305363"/>
<dbReference type="KEGG" id="abu:Abu_0369"/>
<dbReference type="eggNOG" id="COG2896">
    <property type="taxonomic scope" value="Bacteria"/>
</dbReference>
<dbReference type="HOGENOM" id="CLU_009273_0_1_7"/>
<dbReference type="UniPathway" id="UPA00344"/>
<dbReference type="Proteomes" id="UP000001136">
    <property type="component" value="Chromosome"/>
</dbReference>
<dbReference type="GO" id="GO:0051539">
    <property type="term" value="F:4 iron, 4 sulfur cluster binding"/>
    <property type="evidence" value="ECO:0007669"/>
    <property type="project" value="UniProtKB-UniRule"/>
</dbReference>
<dbReference type="GO" id="GO:0061799">
    <property type="term" value="F:cyclic pyranopterin monophosphate synthase activity"/>
    <property type="evidence" value="ECO:0007669"/>
    <property type="project" value="TreeGrafter"/>
</dbReference>
<dbReference type="GO" id="GO:0061798">
    <property type="term" value="F:GTP 3',8'-cyclase activity"/>
    <property type="evidence" value="ECO:0007669"/>
    <property type="project" value="UniProtKB-UniRule"/>
</dbReference>
<dbReference type="GO" id="GO:0005525">
    <property type="term" value="F:GTP binding"/>
    <property type="evidence" value="ECO:0007669"/>
    <property type="project" value="UniProtKB-UniRule"/>
</dbReference>
<dbReference type="GO" id="GO:0046872">
    <property type="term" value="F:metal ion binding"/>
    <property type="evidence" value="ECO:0007669"/>
    <property type="project" value="UniProtKB-KW"/>
</dbReference>
<dbReference type="GO" id="GO:1904047">
    <property type="term" value="F:S-adenosyl-L-methionine binding"/>
    <property type="evidence" value="ECO:0007669"/>
    <property type="project" value="UniProtKB-UniRule"/>
</dbReference>
<dbReference type="GO" id="GO:0006777">
    <property type="term" value="P:Mo-molybdopterin cofactor biosynthetic process"/>
    <property type="evidence" value="ECO:0007669"/>
    <property type="project" value="UniProtKB-UniRule"/>
</dbReference>
<dbReference type="CDD" id="cd01335">
    <property type="entry name" value="Radical_SAM"/>
    <property type="match status" value="1"/>
</dbReference>
<dbReference type="CDD" id="cd21117">
    <property type="entry name" value="Twitch_MoaA"/>
    <property type="match status" value="1"/>
</dbReference>
<dbReference type="Gene3D" id="3.20.20.70">
    <property type="entry name" value="Aldolase class I"/>
    <property type="match status" value="1"/>
</dbReference>
<dbReference type="HAMAP" id="MF_01225_B">
    <property type="entry name" value="MoaA_B"/>
    <property type="match status" value="1"/>
</dbReference>
<dbReference type="InterPro" id="IPR013785">
    <property type="entry name" value="Aldolase_TIM"/>
</dbReference>
<dbReference type="InterPro" id="IPR006638">
    <property type="entry name" value="Elp3/MiaA/NifB-like_rSAM"/>
</dbReference>
<dbReference type="InterPro" id="IPR013483">
    <property type="entry name" value="MoaA"/>
</dbReference>
<dbReference type="InterPro" id="IPR000385">
    <property type="entry name" value="MoaA_NifB_PqqE_Fe-S-bd_CS"/>
</dbReference>
<dbReference type="InterPro" id="IPR010505">
    <property type="entry name" value="MoaA_twitch"/>
</dbReference>
<dbReference type="InterPro" id="IPR050105">
    <property type="entry name" value="MoCo_biosynth_MoaA/MoaC"/>
</dbReference>
<dbReference type="InterPro" id="IPR007197">
    <property type="entry name" value="rSAM"/>
</dbReference>
<dbReference type="NCBIfam" id="TIGR02666">
    <property type="entry name" value="moaA"/>
    <property type="match status" value="1"/>
</dbReference>
<dbReference type="NCBIfam" id="NF001199">
    <property type="entry name" value="PRK00164.2-1"/>
    <property type="match status" value="1"/>
</dbReference>
<dbReference type="PANTHER" id="PTHR22960:SF0">
    <property type="entry name" value="MOLYBDENUM COFACTOR BIOSYNTHESIS PROTEIN 1"/>
    <property type="match status" value="1"/>
</dbReference>
<dbReference type="PANTHER" id="PTHR22960">
    <property type="entry name" value="MOLYBDOPTERIN COFACTOR SYNTHESIS PROTEIN A"/>
    <property type="match status" value="1"/>
</dbReference>
<dbReference type="Pfam" id="PF13353">
    <property type="entry name" value="Fer4_12"/>
    <property type="match status" value="1"/>
</dbReference>
<dbReference type="Pfam" id="PF06463">
    <property type="entry name" value="Mob_synth_C"/>
    <property type="match status" value="1"/>
</dbReference>
<dbReference type="Pfam" id="PF04055">
    <property type="entry name" value="Radical_SAM"/>
    <property type="match status" value="1"/>
</dbReference>
<dbReference type="SFLD" id="SFLDG01383">
    <property type="entry name" value="cyclic_pyranopterin_phosphate"/>
    <property type="match status" value="1"/>
</dbReference>
<dbReference type="SFLD" id="SFLDG01072">
    <property type="entry name" value="dehydrogenase_like"/>
    <property type="match status" value="1"/>
</dbReference>
<dbReference type="SMART" id="SM00729">
    <property type="entry name" value="Elp3"/>
    <property type="match status" value="1"/>
</dbReference>
<dbReference type="SUPFAM" id="SSF102114">
    <property type="entry name" value="Radical SAM enzymes"/>
    <property type="match status" value="1"/>
</dbReference>
<dbReference type="PROSITE" id="PS01305">
    <property type="entry name" value="MOAA_NIFB_PQQE"/>
    <property type="match status" value="1"/>
</dbReference>
<dbReference type="PROSITE" id="PS51918">
    <property type="entry name" value="RADICAL_SAM"/>
    <property type="match status" value="1"/>
</dbReference>
<protein>
    <recommendedName>
        <fullName evidence="1">GTP 3',8-cyclase</fullName>
        <ecNumber evidence="1">4.1.99.22</ecNumber>
    </recommendedName>
    <alternativeName>
        <fullName evidence="1">Molybdenum cofactor biosynthesis protein A</fullName>
    </alternativeName>
</protein>
<sequence>MLIDGFGRKVDYLRVSVTERCNFRCQYCMPEKPFSWVPRENLLSYEDLFKFIKASIDEGIKKVRITGGEPLLREDLDFFIKMVFDYKKDIDLALTTNGYLLSKMAKKLKDAGLKRVNISLDTLNKETAQKIAQKDVLEKVLEGIEEASKVGLKIKINCVPLKGVSEKDVLEVLEFCKSRGFVVRFIEFMENFHAKDGAKGLNSDEIKAIIAQKYPNFKTVLRDTSSPAQYYELEDGYQFGIIEPHKDDFCASCNRIRLTAEGFLIPCLYFEDAMSIKNAVQSNKIDEAVEILKKVLKNKPEKNKWSQKDDNEVSTRAFYQTGG</sequence>